<proteinExistence type="evidence at protein level"/>
<gene>
    <name type="primary">HSP90AA1</name>
    <name type="synonym">HSP90A</name>
    <name type="synonym">HSPCA</name>
</gene>
<keyword id="KW-0007">Acetylation</keyword>
<keyword id="KW-0067">ATP-binding</keyword>
<keyword id="KW-1003">Cell membrane</keyword>
<keyword id="KW-0143">Chaperone</keyword>
<keyword id="KW-0963">Cytoplasm</keyword>
<keyword id="KW-0378">Hydrolase</keyword>
<keyword id="KW-0472">Membrane</keyword>
<keyword id="KW-0496">Mitochondrion</keyword>
<keyword id="KW-0547">Nucleotide-binding</keyword>
<keyword id="KW-0539">Nucleus</keyword>
<keyword id="KW-0597">Phosphoprotein</keyword>
<keyword id="KW-1185">Reference proteome</keyword>
<keyword id="KW-0702">S-nitrosylation</keyword>
<keyword id="KW-0346">Stress response</keyword>
<keyword id="KW-0832">Ubl conjugation</keyword>
<name>HS90A_BOVIN</name>
<comment type="function">
    <text evidence="2">Molecular chaperone that promotes the maturation, structural maintenance and proper regulation of specific target proteins involved for instance in cell cycle control and signal transduction. Undergoes a functional cycle that is linked to its ATPase activity which is essential for its chaperone activity. This cycle probably induces conformational changes in the client proteins, thereby causing their activation. Interacts dynamically with various co-chaperones that modulate its substrate recognition, ATPase cycle and chaperone function. Engages with a range of client protein classes via its interaction with various co-chaperone proteins or complexes, that act as adapters, simultaneously able to interact with the specific client and the central chaperone itself. Recruitment of ATP and co-chaperone followed by client protein forms a functional chaperone. After the completion of the chaperoning process, properly folded client protein and co-chaperone leave HSP90 in an ADP-bound partially open conformation and finally, ADP is released from HSP90 which acquires an open conformation for the next cycle. Plays a critical role in mitochondrial import, delivers preproteins to the mitochondrial import receptor TOMM70. Apart from its chaperone activity, it also plays a role in the regulation of the transcription machinery. HSP90 and its co-chaperones modulate transcription at least at three different levels. In the first place, they alter the steady-state levels of certain transcription factors in response to various physiological cues. Second, they modulate the activity of certain epigenetic modifiers, such as histone deacetylases or DNA methyl transferases, and thereby respond to the change in the environment. Third, they participate in the eviction of histones from the promoter region of certain genes and thereby turn on gene expression. Binds bacterial lipopolysaccharide (LPS) and mediates LPS-induced inflammatory response, including TNF secretion by monocytes. Antagonizes STUB1-mediated inhibition of TGF-beta signaling via inhibition of STUB1-mediated SMAD3 ubiquitination and degradation. Mediates the association of TOMM70 with IRF3 or TBK1 in mitochondrial outer membrane which promotes host antiviral response.</text>
</comment>
<comment type="catalytic activity">
    <reaction evidence="2">
        <text>ATP + H2O = ADP + phosphate + H(+)</text>
        <dbReference type="Rhea" id="RHEA:13065"/>
        <dbReference type="ChEBI" id="CHEBI:15377"/>
        <dbReference type="ChEBI" id="CHEBI:15378"/>
        <dbReference type="ChEBI" id="CHEBI:30616"/>
        <dbReference type="ChEBI" id="CHEBI:43474"/>
        <dbReference type="ChEBI" id="CHEBI:456216"/>
        <dbReference type="EC" id="3.6.4.10"/>
    </reaction>
</comment>
<comment type="activity regulation">
    <text evidence="2">In the resting state, through the dimerization of its C-terminal domain, HSP90 forms a homodimer which is defined as the open conformation. Upon ATP-binding, the N-terminal domain undergoes significant conformational changes and comes in contact to form an active closed conformation. After HSP90 finishes its chaperoning tasks of assisting the proper folding, stabilization and activation of client proteins under the active state, ATP molecule is hydrolyzed to ADP which then dissociates from HSP90 and directs the protein back to the resting state. Co-chaperone TSC1 promotes ATP binding and inhibits HSP90AA1 ATPase activity. Binding to phosphorylated AHSA1 promotes HSP90AA1 ATPase activity. Inhibited by geldanamycin, Ganetespib (STA-9090) and SNX-2112.</text>
</comment>
<comment type="subunit">
    <text evidence="2 3 4">Homodimer. Identified in NR3C1/GCR steroid receptor-chaperone complexes formed at least by NR3C1, HSP90AA1 and a variety of proteins containing TPR repeats such as FKBP4, FKBP5, PPID, PPP5C or STIP1. Forms a complex containing HSP90AA1, TSC1 and TSC2; TSC1 is required to recruit TCS2 to the complex. The closed form interacts (via the middle domain and TPR repeat-binding motif) with co-chaperone TSC1 (via C-terminus). Interacts with TOM34. Interacts with TERT; the interaction, together with PTGES3, is required for correct assembly and stabilization of the TERT holoenzyme complex. Interacts with CHORDC1 and DNAJC7. Interacts with STUB1 and UBE2N; may couple the chaperone and ubiquitination systems. Interacts (via TPR repeat-binding motif) with PPP5C (via TPR repeats); the interaction is direct and activates PPP5C phosphatase activity. Following LPS binding, may form a complex with CXCR4, GDF5 and HSPA8. Interacts with KSR1. Interacts with co-chaperone CDC37 (via C-terminus); the interaction inhibits HSP90AA1 ATPase activity. May interact with NWD1. Interacts with FNIP1 and FNIP2; the interaction inhibits HSP90AA1 ATPase activity. Interacts with co-chaperone AHSA1 (phosphorylated on 'Tyr-223'); the interaction activates HSP90AA1 ATPase activity and results in the dissociation of TSC1 from HSP90AA1. Interacts with FLCN in the presence of FNIP1. Interacts with HSP70, STIP1 and PTGES3. Interacts with SMYD3; this interaction enhances SMYD3 histone-lysine N-methyltransferase. Interacts with SGTA (via TPR repeats). Interacts with TTC1 (via TPR repeats). Interacts with HSF1 in an ATP-dependent manner. Interacts with MET; the interaction suppresses MET kinase activity. Interacts with ERBB2 in an ATP-dependent manner; the interaction suppresses ERBB2 kinase activity. Interacts with HIF1A, KEAP1 and RHOBTB2. Interacts with HSF1; this interaction is decreased in a IER5-dependent manner, promoting HSF1 accumulation in the nucleus, homotrimerization and DNA-binding activities. Interacts with STUB1 and SMAD3. Interacts with HSP90AB1; interaction is constitutive (By similarity). Interacts with HECTD1 (via N-terminus) (By similarity). Interacts with NR3C1 (via domain NR LBD) and NR1D1 (via domain NR LBD) (By similarity). Interacts with NLPR12 (By similarity). Interacts with PDCL3 (By similarity). Interacts with TOMM70; the interaction is required for preprotein mitochondrial import. Interacts with TOMM70, IRF3 and TBK1; the interactions are direct and mediate the association of TOMM70 with IRF3 and TBK1 (By similarity). Forms a complex with ASL, ASS1 and NOS2; the complex regulates cell-autonomous L-arginine synthesis and citrulline recycling while channeling extracellular L-arginine to nitric oxide synthesis pathway.</text>
</comment>
<comment type="interaction">
    <interactant intactId="EBI-6477314">
        <id>Q76LV2</id>
    </interactant>
    <interactant intactId="EBI-6477285">
        <id>P02639</id>
        <label>S100A1</label>
    </interactant>
    <organismsDiffer>false</organismsDiffer>
    <experiments>2</experiments>
</comment>
<comment type="subcellular location">
    <subcellularLocation>
        <location evidence="3">Nucleus</location>
    </subcellularLocation>
    <subcellularLocation>
        <location evidence="3">Cytoplasm</location>
    </subcellularLocation>
    <subcellularLocation>
        <location evidence="2">Melanosome</location>
    </subcellularLocation>
    <subcellularLocation>
        <location evidence="2">Cell membrane</location>
    </subcellularLocation>
    <subcellularLocation>
        <location evidence="2">Mitochondrion</location>
    </subcellularLocation>
</comment>
<comment type="domain">
    <text evidence="2">The TPR repeat-binding motif mediates interaction with TPR repeat-containing proteins like the co-chaperone STUB1.</text>
</comment>
<comment type="PTM">
    <text evidence="2">ISGylated.</text>
</comment>
<comment type="PTM">
    <text evidence="2">S-nitrosylated; negatively regulates the ATPase activity and the activation of eNOS by HSP90AA1.</text>
</comment>
<comment type="PTM">
    <text evidence="3">Ubiquitinated via 'Lys-63'-linked polyubiquitination by HECTD1. Ubiquitination promotes translocation into the cytoplasm away from the membrane and secretory pathways.</text>
</comment>
<comment type="similarity">
    <text evidence="6">Belongs to the heat shock protein 90 family.</text>
</comment>
<protein>
    <recommendedName>
        <fullName>Heat shock protein HSP 90-alpha</fullName>
        <ecNumber evidence="2">3.6.4.10</ecNumber>
    </recommendedName>
</protein>
<accession>Q76LV2</accession>
<reference key="1">
    <citation type="submission" date="2001-09" db="EMBL/GenBank/DDBJ databases">
        <title>cDNA sequences of two isoforms of bovine heat-shock protein 90.</title>
        <authorList>
            <person name="Watanabe A."/>
            <person name="Uchida I."/>
            <person name="Fujimoto Y."/>
            <person name="Nakata K."/>
            <person name="Oikawa S."/>
        </authorList>
    </citation>
    <scope>NUCLEOTIDE SEQUENCE [MRNA]</scope>
    <source>
        <tissue>Mammary gland</tissue>
    </source>
</reference>
<evidence type="ECO:0000250" key="1"/>
<evidence type="ECO:0000250" key="2">
    <source>
        <dbReference type="UniProtKB" id="P07900"/>
    </source>
</evidence>
<evidence type="ECO:0000250" key="3">
    <source>
        <dbReference type="UniProtKB" id="P07901"/>
    </source>
</evidence>
<evidence type="ECO:0000250" key="4">
    <source>
        <dbReference type="UniProtKB" id="P82995"/>
    </source>
</evidence>
<evidence type="ECO:0000256" key="5">
    <source>
        <dbReference type="SAM" id="MobiDB-lite"/>
    </source>
</evidence>
<evidence type="ECO:0000305" key="6"/>
<dbReference type="EC" id="3.6.4.10" evidence="2"/>
<dbReference type="EMBL" id="AB072368">
    <property type="protein sequence ID" value="BAC82487.1"/>
    <property type="molecule type" value="mRNA"/>
</dbReference>
<dbReference type="RefSeq" id="NP_001012688.1">
    <property type="nucleotide sequence ID" value="NM_001012670.2"/>
</dbReference>
<dbReference type="SMR" id="Q76LV2"/>
<dbReference type="BioGRID" id="159145">
    <property type="interactions" value="3"/>
</dbReference>
<dbReference type="CORUM" id="Q76LV2"/>
<dbReference type="FunCoup" id="Q76LV2">
    <property type="interactions" value="2731"/>
</dbReference>
<dbReference type="IntAct" id="Q76LV2">
    <property type="interactions" value="1"/>
</dbReference>
<dbReference type="STRING" id="9913.ENSBTAP00000008225"/>
<dbReference type="BindingDB" id="Q76LV2"/>
<dbReference type="PaxDb" id="9913-ENSBTAP00000008225"/>
<dbReference type="PeptideAtlas" id="Q76LV2"/>
<dbReference type="GeneID" id="281832"/>
<dbReference type="KEGG" id="bta:281832"/>
<dbReference type="CTD" id="3320"/>
<dbReference type="VEuPathDB" id="HostDB:ENSBTAG00000006270"/>
<dbReference type="eggNOG" id="KOG0019">
    <property type="taxonomic scope" value="Eukaryota"/>
</dbReference>
<dbReference type="HOGENOM" id="CLU_006684_1_3_1"/>
<dbReference type="InParanoid" id="Q76LV2"/>
<dbReference type="OMA" id="MRRMKEM"/>
<dbReference type="OrthoDB" id="5426351at2759"/>
<dbReference type="TreeFam" id="TF300686"/>
<dbReference type="Reactome" id="R-BTA-1227986">
    <property type="pathway name" value="Signaling by ERBB2"/>
</dbReference>
<dbReference type="Reactome" id="R-BTA-1474151">
    <property type="pathway name" value="Tetrahydrobiopterin (BH4) synthesis, recycling, salvage and regulation"/>
</dbReference>
<dbReference type="Reactome" id="R-BTA-168928">
    <property type="pathway name" value="DDX58/IFIH1-mediated induction of interferon-alpha/beta"/>
</dbReference>
<dbReference type="Reactome" id="R-BTA-2029482">
    <property type="pathway name" value="Regulation of actin dynamics for phagocytic cup formation"/>
</dbReference>
<dbReference type="Reactome" id="R-BTA-203615">
    <property type="pathway name" value="eNOS activation"/>
</dbReference>
<dbReference type="Reactome" id="R-BTA-2565942">
    <property type="pathway name" value="Regulation of PLK1 Activity at G2/M Transition"/>
</dbReference>
<dbReference type="Reactome" id="R-BTA-3371497">
    <property type="pathway name" value="HSP90 chaperone cycle for steroid hormone receptors (SHR) in the presence of ligand"/>
</dbReference>
<dbReference type="Reactome" id="R-BTA-3371511">
    <property type="pathway name" value="HSF1 activation"/>
</dbReference>
<dbReference type="Reactome" id="R-BTA-3371568">
    <property type="pathway name" value="Attenuation phase"/>
</dbReference>
<dbReference type="Reactome" id="R-BTA-3371571">
    <property type="pathway name" value="HSF1-dependent transactivation"/>
</dbReference>
<dbReference type="Reactome" id="R-BTA-380259">
    <property type="pathway name" value="Loss of Nlp from mitotic centrosomes"/>
</dbReference>
<dbReference type="Reactome" id="R-BTA-380270">
    <property type="pathway name" value="Recruitment of mitotic centrosome proteins and complexes"/>
</dbReference>
<dbReference type="Reactome" id="R-BTA-380284">
    <property type="pathway name" value="Loss of proteins required for interphase microtubule organization from the centrosome"/>
</dbReference>
<dbReference type="Reactome" id="R-BTA-380320">
    <property type="pathway name" value="Recruitment of NuMA to mitotic centrosomes"/>
</dbReference>
<dbReference type="Reactome" id="R-BTA-399954">
    <property type="pathway name" value="Sema3A PAK dependent Axon repulsion"/>
</dbReference>
<dbReference type="Reactome" id="R-BTA-4420097">
    <property type="pathway name" value="VEGFA-VEGFR2 Pathway"/>
</dbReference>
<dbReference type="Reactome" id="R-BTA-5218920">
    <property type="pathway name" value="VEGFR2 mediated vascular permeability"/>
</dbReference>
<dbReference type="Reactome" id="R-BTA-5620912">
    <property type="pathway name" value="Anchoring of the basal body to the plasma membrane"/>
</dbReference>
<dbReference type="Reactome" id="R-BTA-5675482">
    <property type="pathway name" value="Regulation of necroptotic cell death"/>
</dbReference>
<dbReference type="Reactome" id="R-BTA-6798695">
    <property type="pathway name" value="Neutrophil degranulation"/>
</dbReference>
<dbReference type="Reactome" id="R-BTA-8854518">
    <property type="pathway name" value="AURKA Activation by TPX2"/>
</dbReference>
<dbReference type="Reactome" id="R-BTA-8863795">
    <property type="pathway name" value="Downregulation of ERBB2 signaling"/>
</dbReference>
<dbReference type="Reactome" id="R-BTA-8939211">
    <property type="pathway name" value="ESR-mediated signaling"/>
</dbReference>
<dbReference type="Reactome" id="R-BTA-9009391">
    <property type="pathway name" value="Extra-nuclear estrogen signaling"/>
</dbReference>
<dbReference type="Reactome" id="R-BTA-9013418">
    <property type="pathway name" value="RHOBTB2 GTPase cycle"/>
</dbReference>
<dbReference type="Reactome" id="R-BTA-9018519">
    <property type="pathway name" value="Estrogen-dependent gene expression"/>
</dbReference>
<dbReference type="Reactome" id="R-BTA-9652282">
    <property type="pathway name" value="Drug-mediated inhibition of ERBB2 signaling"/>
</dbReference>
<dbReference type="PRO" id="PR:Q76LV2"/>
<dbReference type="Proteomes" id="UP000009136">
    <property type="component" value="Chromosome 21"/>
</dbReference>
<dbReference type="Bgee" id="ENSBTAG00000006270">
    <property type="expression patterns" value="Expressed in spermatid and 102 other cell types or tissues"/>
</dbReference>
<dbReference type="GO" id="GO:0005737">
    <property type="term" value="C:cytoplasm"/>
    <property type="evidence" value="ECO:0000314"/>
    <property type="project" value="CAFA"/>
</dbReference>
<dbReference type="GO" id="GO:0005829">
    <property type="term" value="C:cytosol"/>
    <property type="evidence" value="ECO:0000318"/>
    <property type="project" value="GO_Central"/>
</dbReference>
<dbReference type="GO" id="GO:0042470">
    <property type="term" value="C:melanosome"/>
    <property type="evidence" value="ECO:0007669"/>
    <property type="project" value="UniProtKB-SubCell"/>
</dbReference>
<dbReference type="GO" id="GO:0005739">
    <property type="term" value="C:mitochondrion"/>
    <property type="evidence" value="ECO:0000250"/>
    <property type="project" value="UniProtKB"/>
</dbReference>
<dbReference type="GO" id="GO:0043209">
    <property type="term" value="C:myelin sheath"/>
    <property type="evidence" value="ECO:0000318"/>
    <property type="project" value="GO_Central"/>
</dbReference>
<dbReference type="GO" id="GO:0043025">
    <property type="term" value="C:neuronal cell body"/>
    <property type="evidence" value="ECO:0000318"/>
    <property type="project" value="GO_Central"/>
</dbReference>
<dbReference type="GO" id="GO:0005634">
    <property type="term" value="C:nucleus"/>
    <property type="evidence" value="ECO:0000250"/>
    <property type="project" value="AgBase"/>
</dbReference>
<dbReference type="GO" id="GO:0048471">
    <property type="term" value="C:perinuclear region of cytoplasm"/>
    <property type="evidence" value="ECO:0000318"/>
    <property type="project" value="GO_Central"/>
</dbReference>
<dbReference type="GO" id="GO:0005886">
    <property type="term" value="C:plasma membrane"/>
    <property type="evidence" value="ECO:0000318"/>
    <property type="project" value="GO_Central"/>
</dbReference>
<dbReference type="GO" id="GO:0032991">
    <property type="term" value="C:protein-containing complex"/>
    <property type="evidence" value="ECO:0000318"/>
    <property type="project" value="GO_Central"/>
</dbReference>
<dbReference type="GO" id="GO:0005524">
    <property type="term" value="F:ATP binding"/>
    <property type="evidence" value="ECO:0000250"/>
    <property type="project" value="UniProtKB"/>
</dbReference>
<dbReference type="GO" id="GO:0016887">
    <property type="term" value="F:ATP hydrolysis activity"/>
    <property type="evidence" value="ECO:0000318"/>
    <property type="project" value="GO_Central"/>
</dbReference>
<dbReference type="GO" id="GO:0140662">
    <property type="term" value="F:ATP-dependent protein folding chaperone"/>
    <property type="evidence" value="ECO:0007669"/>
    <property type="project" value="InterPro"/>
</dbReference>
<dbReference type="GO" id="GO:0097718">
    <property type="term" value="F:disordered domain specific binding"/>
    <property type="evidence" value="ECO:0000353"/>
    <property type="project" value="CAFA"/>
</dbReference>
<dbReference type="GO" id="GO:0030235">
    <property type="term" value="F:nitric-oxide synthase regulator activity"/>
    <property type="evidence" value="ECO:0000250"/>
    <property type="project" value="AgBase"/>
</dbReference>
<dbReference type="GO" id="GO:0042803">
    <property type="term" value="F:protein homodimerization activity"/>
    <property type="evidence" value="ECO:0000250"/>
    <property type="project" value="AgBase"/>
</dbReference>
<dbReference type="GO" id="GO:0030911">
    <property type="term" value="F:TPR domain binding"/>
    <property type="evidence" value="ECO:0000250"/>
    <property type="project" value="AgBase"/>
</dbReference>
<dbReference type="GO" id="GO:0051082">
    <property type="term" value="F:unfolded protein binding"/>
    <property type="evidence" value="ECO:0000318"/>
    <property type="project" value="GO_Central"/>
</dbReference>
<dbReference type="GO" id="GO:0002218">
    <property type="term" value="P:activation of innate immune response"/>
    <property type="evidence" value="ECO:0000250"/>
    <property type="project" value="UniProtKB"/>
</dbReference>
<dbReference type="GO" id="GO:0034605">
    <property type="term" value="P:cellular response to heat"/>
    <property type="evidence" value="ECO:0000318"/>
    <property type="project" value="GO_Central"/>
</dbReference>
<dbReference type="GO" id="GO:0098586">
    <property type="term" value="P:cellular response to virus"/>
    <property type="evidence" value="ECO:0000250"/>
    <property type="project" value="UniProtKB"/>
</dbReference>
<dbReference type="GO" id="GO:0002230">
    <property type="term" value="P:positive regulation of defense response to virus by host"/>
    <property type="evidence" value="ECO:0000250"/>
    <property type="project" value="UniProtKB"/>
</dbReference>
<dbReference type="GO" id="GO:0032728">
    <property type="term" value="P:positive regulation of interferon-beta production"/>
    <property type="evidence" value="ECO:0000250"/>
    <property type="project" value="UniProtKB"/>
</dbReference>
<dbReference type="GO" id="GO:0045429">
    <property type="term" value="P:positive regulation of nitric oxide biosynthetic process"/>
    <property type="evidence" value="ECO:0000250"/>
    <property type="project" value="AgBase"/>
</dbReference>
<dbReference type="GO" id="GO:0006457">
    <property type="term" value="P:protein folding"/>
    <property type="evidence" value="ECO:0000318"/>
    <property type="project" value="GO_Central"/>
</dbReference>
<dbReference type="GO" id="GO:0050821">
    <property type="term" value="P:protein stabilization"/>
    <property type="evidence" value="ECO:0000318"/>
    <property type="project" value="GO_Central"/>
</dbReference>
<dbReference type="GO" id="GO:0042981">
    <property type="term" value="P:regulation of apoptotic process"/>
    <property type="evidence" value="ECO:0000250"/>
    <property type="project" value="UniProtKB"/>
</dbReference>
<dbReference type="GO" id="GO:0046677">
    <property type="term" value="P:response to antibiotic"/>
    <property type="evidence" value="ECO:0000250"/>
    <property type="project" value="AgBase"/>
</dbReference>
<dbReference type="GO" id="GO:0009409">
    <property type="term" value="P:response to cold"/>
    <property type="evidence" value="ECO:0000250"/>
    <property type="project" value="AgBase"/>
</dbReference>
<dbReference type="GO" id="GO:0009408">
    <property type="term" value="P:response to heat"/>
    <property type="evidence" value="ECO:0000250"/>
    <property type="project" value="AgBase"/>
</dbReference>
<dbReference type="CDD" id="cd16927">
    <property type="entry name" value="HATPase_Hsp90-like"/>
    <property type="match status" value="1"/>
</dbReference>
<dbReference type="FunFam" id="1.20.120.790:FF:000001">
    <property type="entry name" value="Heat shock protein 90 alpha"/>
    <property type="match status" value="1"/>
</dbReference>
<dbReference type="FunFam" id="3.30.230.80:FF:000001">
    <property type="entry name" value="Heat shock protein 90 alpha"/>
    <property type="match status" value="1"/>
</dbReference>
<dbReference type="FunFam" id="3.40.50.11260:FF:000001">
    <property type="entry name" value="Heat shock protein 90 alpha"/>
    <property type="match status" value="1"/>
</dbReference>
<dbReference type="FunFam" id="3.30.565.10:FF:000204">
    <property type="entry name" value="Heat shock protein HSP 90-beta"/>
    <property type="match status" value="1"/>
</dbReference>
<dbReference type="Gene3D" id="3.30.230.80">
    <property type="match status" value="1"/>
</dbReference>
<dbReference type="Gene3D" id="3.40.50.11260">
    <property type="match status" value="1"/>
</dbReference>
<dbReference type="Gene3D" id="1.20.120.790">
    <property type="entry name" value="Heat shock protein 90, C-terminal domain"/>
    <property type="match status" value="1"/>
</dbReference>
<dbReference type="Gene3D" id="3.30.565.10">
    <property type="entry name" value="Histidine kinase-like ATPase, C-terminal domain"/>
    <property type="match status" value="1"/>
</dbReference>
<dbReference type="HAMAP" id="MF_00505">
    <property type="entry name" value="HSP90"/>
    <property type="match status" value="1"/>
</dbReference>
<dbReference type="InterPro" id="IPR036890">
    <property type="entry name" value="HATPase_C_sf"/>
</dbReference>
<dbReference type="InterPro" id="IPR019805">
    <property type="entry name" value="Heat_shock_protein_90_CS"/>
</dbReference>
<dbReference type="InterPro" id="IPR037196">
    <property type="entry name" value="HSP90_C"/>
</dbReference>
<dbReference type="InterPro" id="IPR001404">
    <property type="entry name" value="Hsp90_fam"/>
</dbReference>
<dbReference type="InterPro" id="IPR020575">
    <property type="entry name" value="Hsp90_N"/>
</dbReference>
<dbReference type="InterPro" id="IPR020568">
    <property type="entry name" value="Ribosomal_Su5_D2-typ_SF"/>
</dbReference>
<dbReference type="NCBIfam" id="NF003555">
    <property type="entry name" value="PRK05218.1"/>
    <property type="match status" value="1"/>
</dbReference>
<dbReference type="PANTHER" id="PTHR11528">
    <property type="entry name" value="HEAT SHOCK PROTEIN 90 FAMILY MEMBER"/>
    <property type="match status" value="1"/>
</dbReference>
<dbReference type="Pfam" id="PF13589">
    <property type="entry name" value="HATPase_c_3"/>
    <property type="match status" value="1"/>
</dbReference>
<dbReference type="Pfam" id="PF00183">
    <property type="entry name" value="HSP90"/>
    <property type="match status" value="1"/>
</dbReference>
<dbReference type="PIRSF" id="PIRSF002583">
    <property type="entry name" value="Hsp90"/>
    <property type="match status" value="1"/>
</dbReference>
<dbReference type="PRINTS" id="PR00775">
    <property type="entry name" value="HEATSHOCK90"/>
</dbReference>
<dbReference type="SMART" id="SM00387">
    <property type="entry name" value="HATPase_c"/>
    <property type="match status" value="1"/>
</dbReference>
<dbReference type="SUPFAM" id="SSF55874">
    <property type="entry name" value="ATPase domain of HSP90 chaperone/DNA topoisomerase II/histidine kinase"/>
    <property type="match status" value="1"/>
</dbReference>
<dbReference type="SUPFAM" id="SSF110942">
    <property type="entry name" value="HSP90 C-terminal domain"/>
    <property type="match status" value="1"/>
</dbReference>
<dbReference type="SUPFAM" id="SSF54211">
    <property type="entry name" value="Ribosomal protein S5 domain 2-like"/>
    <property type="match status" value="1"/>
</dbReference>
<dbReference type="PROSITE" id="PS00298">
    <property type="entry name" value="HSP90"/>
    <property type="match status" value="1"/>
</dbReference>
<organism>
    <name type="scientific">Bos taurus</name>
    <name type="common">Bovine</name>
    <dbReference type="NCBI Taxonomy" id="9913"/>
    <lineage>
        <taxon>Eukaryota</taxon>
        <taxon>Metazoa</taxon>
        <taxon>Chordata</taxon>
        <taxon>Craniata</taxon>
        <taxon>Vertebrata</taxon>
        <taxon>Euteleostomi</taxon>
        <taxon>Mammalia</taxon>
        <taxon>Eutheria</taxon>
        <taxon>Laurasiatheria</taxon>
        <taxon>Artiodactyla</taxon>
        <taxon>Ruminantia</taxon>
        <taxon>Pecora</taxon>
        <taxon>Bovidae</taxon>
        <taxon>Bovinae</taxon>
        <taxon>Bos</taxon>
    </lineage>
</organism>
<feature type="chain" id="PRO_0000247932" description="Heat shock protein HSP 90-alpha">
    <location>
        <begin position="1"/>
        <end position="733"/>
    </location>
</feature>
<feature type="region of interest" description="Interaction with NR3C1" evidence="3">
    <location>
        <begin position="9"/>
        <end position="236"/>
    </location>
</feature>
<feature type="region of interest" description="Disordered" evidence="5">
    <location>
        <begin position="225"/>
        <end position="279"/>
    </location>
</feature>
<feature type="region of interest" description="Interaction with NR3C1" evidence="3">
    <location>
        <begin position="272"/>
        <end position="617"/>
    </location>
</feature>
<feature type="region of interest" description="Interaction with FLCN and FNIP1" evidence="2">
    <location>
        <begin position="285"/>
        <end position="733"/>
    </location>
</feature>
<feature type="region of interest" description="Interaction with FNIP2 and TSC1" evidence="2">
    <location>
        <begin position="285"/>
        <end position="621"/>
    </location>
</feature>
<feature type="region of interest" description="Interaction with NR1D1" evidence="3">
    <location>
        <begin position="629"/>
        <end position="732"/>
    </location>
</feature>
<feature type="region of interest" description="Required for homodimerization" evidence="2">
    <location>
        <begin position="683"/>
        <end position="733"/>
    </location>
</feature>
<feature type="region of interest" description="Disordered" evidence="5">
    <location>
        <begin position="700"/>
        <end position="733"/>
    </location>
</feature>
<feature type="region of interest" description="Essential for interaction with SMYD3, TSC1 and STIP1/HOP" evidence="2">
    <location>
        <begin position="729"/>
        <end position="733"/>
    </location>
</feature>
<feature type="region of interest" description="Essential for interaction with SGTA and TTC1" evidence="2">
    <location>
        <begin position="730"/>
        <end position="733"/>
    </location>
</feature>
<feature type="short sequence motif" description="TPR repeat-binding" evidence="2">
    <location>
        <begin position="724"/>
        <end position="733"/>
    </location>
</feature>
<feature type="compositionally biased region" description="Acidic residues" evidence="5">
    <location>
        <begin position="230"/>
        <end position="246"/>
    </location>
</feature>
<feature type="compositionally biased region" description="Acidic residues" evidence="5">
    <location>
        <begin position="256"/>
        <end position="269"/>
    </location>
</feature>
<feature type="binding site" evidence="1">
    <location>
        <position position="51"/>
    </location>
    <ligand>
        <name>ATP</name>
        <dbReference type="ChEBI" id="CHEBI:30616"/>
    </ligand>
</feature>
<feature type="binding site" evidence="1">
    <location>
        <position position="93"/>
    </location>
    <ligand>
        <name>ATP</name>
        <dbReference type="ChEBI" id="CHEBI:30616"/>
    </ligand>
</feature>
<feature type="binding site" evidence="1">
    <location>
        <position position="112"/>
    </location>
    <ligand>
        <name>ATP</name>
        <dbReference type="ChEBI" id="CHEBI:30616"/>
    </ligand>
</feature>
<feature type="binding site" evidence="1">
    <location>
        <position position="138"/>
    </location>
    <ligand>
        <name>ATP</name>
        <dbReference type="ChEBI" id="CHEBI:30616"/>
    </ligand>
</feature>
<feature type="binding site" evidence="1">
    <location>
        <position position="401"/>
    </location>
    <ligand>
        <name>ATP</name>
        <dbReference type="ChEBI" id="CHEBI:30616"/>
    </ligand>
</feature>
<feature type="modified residue" description="Phosphothreonine; by PRKDC" evidence="2">
    <location>
        <position position="5"/>
    </location>
</feature>
<feature type="modified residue" description="N6-acetyllysine" evidence="3">
    <location>
        <position position="58"/>
    </location>
</feature>
<feature type="modified residue" description="N6-acetyllysine" evidence="3">
    <location>
        <position position="84"/>
    </location>
</feature>
<feature type="modified residue" description="Phosphoserine" evidence="2">
    <location>
        <position position="231"/>
    </location>
</feature>
<feature type="modified residue" description="Phosphoserine" evidence="2">
    <location>
        <position position="252"/>
    </location>
</feature>
<feature type="modified residue" description="Phosphoserine" evidence="2">
    <location>
        <position position="263"/>
    </location>
</feature>
<feature type="modified residue" description="Phosphotyrosine" evidence="3">
    <location>
        <position position="314"/>
    </location>
</feature>
<feature type="modified residue" description="N6-acetyllysine" evidence="2">
    <location>
        <position position="444"/>
    </location>
</feature>
<feature type="modified residue" description="Phosphoserine" evidence="4">
    <location>
        <position position="454"/>
    </location>
</feature>
<feature type="modified residue" description="N6-acetyllysine" evidence="2">
    <location>
        <position position="459"/>
    </location>
</feature>
<feature type="modified residue" description="Phosphoserine" evidence="2">
    <location>
        <position position="477"/>
    </location>
</feature>
<feature type="modified residue" description="N6-acetyllysine" evidence="2">
    <location>
        <position position="490"/>
    </location>
</feature>
<feature type="modified residue" description="Phosphotyrosine" evidence="3">
    <location>
        <position position="493"/>
    </location>
</feature>
<feature type="modified residue" description="N6-acetyllysine" evidence="2">
    <location>
        <position position="586"/>
    </location>
</feature>
<feature type="modified residue" description="S-nitrosocysteine" evidence="2">
    <location>
        <position position="599"/>
    </location>
</feature>
<feature type="modified residue" description="Phosphoserine" evidence="2">
    <location>
        <position position="642"/>
    </location>
</feature>
<sequence>MPEETQAQDQPMEEEEVETFAFQAEIAQLMSLIINTFYSNKEIFLRELISNSSDALDKIRYESLTDPSKLDSGKELHINLIPNKQDRTLTIVDTGIGMTKADLINNLGTIAKSGTKAFMEALQAGADISMIGQFGVGFYSAYLVAEKVTVITKHNDDEQYAWESSAGGSFTVRTDTGEPMGRGTKVILHLKEDQTEYLEERRIKEIVKKHSQFIGYPITLFVEKERDKEVSDDEAEEKEDKEEEKEKEEKESDDKPEIEDVGSDEEEEEKKDGDKKKKKKIKEKYIDQEELNKTKPIWTRNPDDITNEEYGEFYKSLTNDWEDHLAVKHFSVEGQLEFRALLFVPRRAPFDLFENRKKKNNIKLYVRRVFIMDNCEELIPEYLNFIRGVVDSEDLPLNISREMLQQSKILKVIRKNLVKKCLELFTELAEDKENYKKFYEQFSKNIKLGIHEDSQNRKKLSELLRYYTSASGDEMVSLKDYCTRMKENQKHIYYITGETKDQVANSAFVERLRKHGLEVIYMIEPIDEYCVQQLKEFEGKTLVSVTKEGLELPEDEEEKKKQEEKKTKFENLCKIMKDILEKKVEKVVVSNRLVTSPCCIVTSTYGWTANMERIMKAQALRDNSTMGYMAAKKHLEINPDHSIIETLRQKAEADKNDKSVKDLVILLYETALLSSGFSLEDPQTHANRIYRMIKLGLGIDEDDPTADDSSAAVTEEMPPLEGDDDTSRMEEVD</sequence>